<accession>B8GJ30</accession>
<feature type="chain" id="PRO_1000198848" description="Anthranilate phosphoribosyltransferase">
    <location>
        <begin position="1"/>
        <end position="339"/>
    </location>
</feature>
<feature type="binding site" evidence="1">
    <location>
        <position position="82"/>
    </location>
    <ligand>
        <name>5-phospho-alpha-D-ribose 1-diphosphate</name>
        <dbReference type="ChEBI" id="CHEBI:58017"/>
    </ligand>
</feature>
<feature type="binding site" evidence="1">
    <location>
        <position position="82"/>
    </location>
    <ligand>
        <name>anthranilate</name>
        <dbReference type="ChEBI" id="CHEBI:16567"/>
        <label>1</label>
    </ligand>
</feature>
<feature type="binding site" evidence="1">
    <location>
        <begin position="85"/>
        <end position="86"/>
    </location>
    <ligand>
        <name>5-phospho-alpha-D-ribose 1-diphosphate</name>
        <dbReference type="ChEBI" id="CHEBI:58017"/>
    </ligand>
</feature>
<feature type="binding site" evidence="1">
    <location>
        <position position="90"/>
    </location>
    <ligand>
        <name>5-phospho-alpha-D-ribose 1-diphosphate</name>
        <dbReference type="ChEBI" id="CHEBI:58017"/>
    </ligand>
</feature>
<feature type="binding site" evidence="1">
    <location>
        <begin position="92"/>
        <end position="95"/>
    </location>
    <ligand>
        <name>5-phospho-alpha-D-ribose 1-diphosphate</name>
        <dbReference type="ChEBI" id="CHEBI:58017"/>
    </ligand>
</feature>
<feature type="binding site" evidence="1">
    <location>
        <position position="94"/>
    </location>
    <ligand>
        <name>Mg(2+)</name>
        <dbReference type="ChEBI" id="CHEBI:18420"/>
        <label>1</label>
    </ligand>
</feature>
<feature type="binding site" evidence="1">
    <location>
        <begin position="110"/>
        <end position="118"/>
    </location>
    <ligand>
        <name>5-phospho-alpha-D-ribose 1-diphosphate</name>
        <dbReference type="ChEBI" id="CHEBI:58017"/>
    </ligand>
</feature>
<feature type="binding site" evidence="1">
    <location>
        <position position="113"/>
    </location>
    <ligand>
        <name>anthranilate</name>
        <dbReference type="ChEBI" id="CHEBI:16567"/>
        <label>1</label>
    </ligand>
</feature>
<feature type="binding site" evidence="1">
    <location>
        <position position="122"/>
    </location>
    <ligand>
        <name>5-phospho-alpha-D-ribose 1-diphosphate</name>
        <dbReference type="ChEBI" id="CHEBI:58017"/>
    </ligand>
</feature>
<feature type="binding site" evidence="1">
    <location>
        <position position="168"/>
    </location>
    <ligand>
        <name>anthranilate</name>
        <dbReference type="ChEBI" id="CHEBI:16567"/>
        <label>2</label>
    </ligand>
</feature>
<feature type="binding site" evidence="1">
    <location>
        <position position="226"/>
    </location>
    <ligand>
        <name>Mg(2+)</name>
        <dbReference type="ChEBI" id="CHEBI:18420"/>
        <label>2</label>
    </ligand>
</feature>
<feature type="binding site" evidence="1">
    <location>
        <position position="227"/>
    </location>
    <ligand>
        <name>Mg(2+)</name>
        <dbReference type="ChEBI" id="CHEBI:18420"/>
        <label>1</label>
    </ligand>
</feature>
<feature type="binding site" evidence="1">
    <location>
        <position position="227"/>
    </location>
    <ligand>
        <name>Mg(2+)</name>
        <dbReference type="ChEBI" id="CHEBI:18420"/>
        <label>2</label>
    </ligand>
</feature>
<comment type="function">
    <text evidence="1">Catalyzes the transfer of the phosphoribosyl group of 5-phosphorylribose-1-pyrophosphate (PRPP) to anthranilate to yield N-(5'-phosphoribosyl)-anthranilate (PRA).</text>
</comment>
<comment type="catalytic activity">
    <reaction evidence="1">
        <text>N-(5-phospho-beta-D-ribosyl)anthranilate + diphosphate = 5-phospho-alpha-D-ribose 1-diphosphate + anthranilate</text>
        <dbReference type="Rhea" id="RHEA:11768"/>
        <dbReference type="ChEBI" id="CHEBI:16567"/>
        <dbReference type="ChEBI" id="CHEBI:18277"/>
        <dbReference type="ChEBI" id="CHEBI:33019"/>
        <dbReference type="ChEBI" id="CHEBI:58017"/>
        <dbReference type="EC" id="2.4.2.18"/>
    </reaction>
</comment>
<comment type="cofactor">
    <cofactor evidence="1">
        <name>Mg(2+)</name>
        <dbReference type="ChEBI" id="CHEBI:18420"/>
    </cofactor>
    <text evidence="1">Binds 2 magnesium ions per monomer.</text>
</comment>
<comment type="pathway">
    <text evidence="1">Amino-acid biosynthesis; L-tryptophan biosynthesis; L-tryptophan from chorismate: step 2/5.</text>
</comment>
<comment type="subunit">
    <text evidence="1">Homodimer.</text>
</comment>
<comment type="similarity">
    <text evidence="1">Belongs to the anthranilate phosphoribosyltransferase family.</text>
</comment>
<dbReference type="EC" id="2.4.2.18" evidence="1"/>
<dbReference type="EMBL" id="CP001338">
    <property type="protein sequence ID" value="ACL15603.1"/>
    <property type="molecule type" value="Genomic_DNA"/>
</dbReference>
<dbReference type="RefSeq" id="WP_012616922.1">
    <property type="nucleotide sequence ID" value="NC_011832.1"/>
</dbReference>
<dbReference type="SMR" id="B8GJ30"/>
<dbReference type="STRING" id="521011.Mpal_0217"/>
<dbReference type="GeneID" id="7270602"/>
<dbReference type="KEGG" id="mpl:Mpal_0217"/>
<dbReference type="eggNOG" id="arCOG02012">
    <property type="taxonomic scope" value="Archaea"/>
</dbReference>
<dbReference type="HOGENOM" id="CLU_034315_2_1_2"/>
<dbReference type="OrthoDB" id="8214at2157"/>
<dbReference type="UniPathway" id="UPA00035">
    <property type="reaction ID" value="UER00041"/>
</dbReference>
<dbReference type="Proteomes" id="UP000002457">
    <property type="component" value="Chromosome"/>
</dbReference>
<dbReference type="GO" id="GO:0005829">
    <property type="term" value="C:cytosol"/>
    <property type="evidence" value="ECO:0007669"/>
    <property type="project" value="TreeGrafter"/>
</dbReference>
<dbReference type="GO" id="GO:0004048">
    <property type="term" value="F:anthranilate phosphoribosyltransferase activity"/>
    <property type="evidence" value="ECO:0007669"/>
    <property type="project" value="UniProtKB-UniRule"/>
</dbReference>
<dbReference type="GO" id="GO:0000287">
    <property type="term" value="F:magnesium ion binding"/>
    <property type="evidence" value="ECO:0007669"/>
    <property type="project" value="UniProtKB-UniRule"/>
</dbReference>
<dbReference type="GO" id="GO:0000162">
    <property type="term" value="P:L-tryptophan biosynthetic process"/>
    <property type="evidence" value="ECO:0007669"/>
    <property type="project" value="UniProtKB-UniRule"/>
</dbReference>
<dbReference type="FunFam" id="3.40.1030.10:FF:000002">
    <property type="entry name" value="Anthranilate phosphoribosyltransferase"/>
    <property type="match status" value="1"/>
</dbReference>
<dbReference type="Gene3D" id="3.40.1030.10">
    <property type="entry name" value="Nucleoside phosphorylase/phosphoribosyltransferase catalytic domain"/>
    <property type="match status" value="1"/>
</dbReference>
<dbReference type="Gene3D" id="1.20.970.10">
    <property type="entry name" value="Transferase, Pyrimidine Nucleoside Phosphorylase, Chain C"/>
    <property type="match status" value="1"/>
</dbReference>
<dbReference type="HAMAP" id="MF_00211">
    <property type="entry name" value="TrpD"/>
    <property type="match status" value="1"/>
</dbReference>
<dbReference type="InterPro" id="IPR005940">
    <property type="entry name" value="Anthranilate_Pribosyl_Tfrase"/>
</dbReference>
<dbReference type="InterPro" id="IPR000312">
    <property type="entry name" value="Glycosyl_Trfase_fam3"/>
</dbReference>
<dbReference type="InterPro" id="IPR017459">
    <property type="entry name" value="Glycosyl_Trfase_fam3_N_dom"/>
</dbReference>
<dbReference type="InterPro" id="IPR036320">
    <property type="entry name" value="Glycosyl_Trfase_fam3_N_dom_sf"/>
</dbReference>
<dbReference type="InterPro" id="IPR035902">
    <property type="entry name" value="Nuc_phospho_transferase"/>
</dbReference>
<dbReference type="NCBIfam" id="TIGR01245">
    <property type="entry name" value="trpD"/>
    <property type="match status" value="1"/>
</dbReference>
<dbReference type="PANTHER" id="PTHR43285">
    <property type="entry name" value="ANTHRANILATE PHOSPHORIBOSYLTRANSFERASE"/>
    <property type="match status" value="1"/>
</dbReference>
<dbReference type="PANTHER" id="PTHR43285:SF2">
    <property type="entry name" value="ANTHRANILATE PHOSPHORIBOSYLTRANSFERASE"/>
    <property type="match status" value="1"/>
</dbReference>
<dbReference type="Pfam" id="PF02885">
    <property type="entry name" value="Glycos_trans_3N"/>
    <property type="match status" value="1"/>
</dbReference>
<dbReference type="Pfam" id="PF00591">
    <property type="entry name" value="Glycos_transf_3"/>
    <property type="match status" value="1"/>
</dbReference>
<dbReference type="SUPFAM" id="SSF52418">
    <property type="entry name" value="Nucleoside phosphorylase/phosphoribosyltransferase catalytic domain"/>
    <property type="match status" value="1"/>
</dbReference>
<dbReference type="SUPFAM" id="SSF47648">
    <property type="entry name" value="Nucleoside phosphorylase/phosphoribosyltransferase N-terminal domain"/>
    <property type="match status" value="1"/>
</dbReference>
<reference key="1">
    <citation type="journal article" date="2015" name="Genome Announc.">
        <title>Complete Genome Sequence of Methanosphaerula palustris E1-9CT, a Hydrogenotrophic Methanogen Isolated from a Minerotrophic Fen Peatland.</title>
        <authorList>
            <person name="Cadillo-Quiroz H."/>
            <person name="Browne P."/>
            <person name="Kyrpides N."/>
            <person name="Woyke T."/>
            <person name="Goodwin L."/>
            <person name="Detter C."/>
            <person name="Yavitt J.B."/>
            <person name="Zinder S.H."/>
        </authorList>
    </citation>
    <scope>NUCLEOTIDE SEQUENCE [LARGE SCALE GENOMIC DNA]</scope>
    <source>
        <strain>ATCC BAA-1556 / DSM 19958 / E1-9c</strain>
    </source>
</reference>
<name>TRPD_METPE</name>
<protein>
    <recommendedName>
        <fullName evidence="1">Anthranilate phosphoribosyltransferase</fullName>
        <ecNumber evidence="1">2.4.2.18</ecNumber>
    </recommendedName>
</protein>
<gene>
    <name evidence="1" type="primary">trpD</name>
    <name type="ordered locus">Mpal_0217</name>
</gene>
<organism>
    <name type="scientific">Methanosphaerula palustris (strain ATCC BAA-1556 / DSM 19958 / E1-9c)</name>
    <dbReference type="NCBI Taxonomy" id="521011"/>
    <lineage>
        <taxon>Archaea</taxon>
        <taxon>Methanobacteriati</taxon>
        <taxon>Methanobacteriota</taxon>
        <taxon>Stenosarchaea group</taxon>
        <taxon>Methanomicrobia</taxon>
        <taxon>Methanomicrobiales</taxon>
        <taxon>Methanoregulaceae</taxon>
        <taxon>Methanosphaerula</taxon>
    </lineage>
</organism>
<proteinExistence type="inferred from homology"/>
<evidence type="ECO:0000255" key="1">
    <source>
        <dbReference type="HAMAP-Rule" id="MF_00211"/>
    </source>
</evidence>
<sequence length="339" mass="34600">MIKEALARVIAGQDLPEQMAAGAMEAIMTGAATNAQIGSFLTALRMKGESPAEVAAFAAVMRVHAVQFQVRGGQGRLVDTCGTGGDQAGTFNISTAAAIVAAGAGVRIVKHGNRSASGRCGSADVLEELGVNLAMTPAQEQATLEQAGIVFLFAQTHHPAMKHVAAARKEIGIRTVFNILGPLTNPAGADAQLLGVPEPSLLDLLPPVLQTLGVDHAMIVCGGGLDEISTATATEVVEVKGTEILRYTLTPEQFGIPPVNIAELQGGDVHTSAAIIKGILDGEGGACREITLLNAAAAIYLGGRAVDLNEGVRLAATSIDSGAAAVTLQTLISTSRGET</sequence>
<keyword id="KW-0028">Amino-acid biosynthesis</keyword>
<keyword id="KW-0057">Aromatic amino acid biosynthesis</keyword>
<keyword id="KW-0328">Glycosyltransferase</keyword>
<keyword id="KW-0460">Magnesium</keyword>
<keyword id="KW-0479">Metal-binding</keyword>
<keyword id="KW-1185">Reference proteome</keyword>
<keyword id="KW-0808">Transferase</keyword>
<keyword id="KW-0822">Tryptophan biosynthesis</keyword>